<dbReference type="EC" id="7.1.1.-" evidence="1"/>
<dbReference type="EMBL" id="AF383750">
    <property type="protein sequence ID" value="AAN61692.1"/>
    <property type="molecule type" value="Genomic_DNA"/>
</dbReference>
<dbReference type="SMR" id="Q8HVW2"/>
<dbReference type="GO" id="GO:0009535">
    <property type="term" value="C:chloroplast thylakoid membrane"/>
    <property type="evidence" value="ECO:0007669"/>
    <property type="project" value="UniProtKB-SubCell"/>
</dbReference>
<dbReference type="GO" id="GO:0051539">
    <property type="term" value="F:4 iron, 4 sulfur cluster binding"/>
    <property type="evidence" value="ECO:0007669"/>
    <property type="project" value="UniProtKB-KW"/>
</dbReference>
<dbReference type="GO" id="GO:0005506">
    <property type="term" value="F:iron ion binding"/>
    <property type="evidence" value="ECO:0007669"/>
    <property type="project" value="UniProtKB-UniRule"/>
</dbReference>
<dbReference type="GO" id="GO:0008137">
    <property type="term" value="F:NADH dehydrogenase (ubiquinone) activity"/>
    <property type="evidence" value="ECO:0007669"/>
    <property type="project" value="InterPro"/>
</dbReference>
<dbReference type="GO" id="GO:0048038">
    <property type="term" value="F:quinone binding"/>
    <property type="evidence" value="ECO:0007669"/>
    <property type="project" value="UniProtKB-KW"/>
</dbReference>
<dbReference type="GO" id="GO:0019684">
    <property type="term" value="P:photosynthesis, light reaction"/>
    <property type="evidence" value="ECO:0007669"/>
    <property type="project" value="UniProtKB-UniRule"/>
</dbReference>
<dbReference type="FunFam" id="3.30.70.3270:FF:000006">
    <property type="entry name" value="NAD(P)H-quinone oxidoreductase subunit I, chloroplastic"/>
    <property type="match status" value="1"/>
</dbReference>
<dbReference type="Gene3D" id="3.30.70.3270">
    <property type="match status" value="1"/>
</dbReference>
<dbReference type="HAMAP" id="MF_01351">
    <property type="entry name" value="NDH1_NuoI"/>
    <property type="match status" value="1"/>
</dbReference>
<dbReference type="InterPro" id="IPR017896">
    <property type="entry name" value="4Fe4S_Fe-S-bd"/>
</dbReference>
<dbReference type="InterPro" id="IPR017900">
    <property type="entry name" value="4Fe4S_Fe_S_CS"/>
</dbReference>
<dbReference type="InterPro" id="IPR010226">
    <property type="entry name" value="NADH_quinone_OxRdtase_chainI"/>
</dbReference>
<dbReference type="InterPro" id="IPR004497">
    <property type="entry name" value="NDHI"/>
</dbReference>
<dbReference type="NCBIfam" id="TIGR00403">
    <property type="entry name" value="ndhI"/>
    <property type="match status" value="1"/>
</dbReference>
<dbReference type="NCBIfam" id="TIGR01971">
    <property type="entry name" value="NuoI"/>
    <property type="match status" value="1"/>
</dbReference>
<dbReference type="NCBIfam" id="NF004537">
    <property type="entry name" value="PRK05888.1-3"/>
    <property type="match status" value="1"/>
</dbReference>
<dbReference type="PANTHER" id="PTHR47275">
    <property type="entry name" value="NAD(P)H-QUINONE OXIDOREDUCTASE SUBUNIT I, CHLOROPLASTIC"/>
    <property type="match status" value="1"/>
</dbReference>
<dbReference type="PANTHER" id="PTHR47275:SF1">
    <property type="entry name" value="NAD(P)H-QUINONE OXIDOREDUCTASE SUBUNIT I, CHLOROPLASTIC"/>
    <property type="match status" value="1"/>
</dbReference>
<dbReference type="Pfam" id="PF00037">
    <property type="entry name" value="Fer4"/>
    <property type="match status" value="2"/>
</dbReference>
<dbReference type="SUPFAM" id="SSF54862">
    <property type="entry name" value="4Fe-4S ferredoxins"/>
    <property type="match status" value="1"/>
</dbReference>
<dbReference type="PROSITE" id="PS00198">
    <property type="entry name" value="4FE4S_FER_1"/>
    <property type="match status" value="2"/>
</dbReference>
<dbReference type="PROSITE" id="PS51379">
    <property type="entry name" value="4FE4S_FER_2"/>
    <property type="match status" value="2"/>
</dbReference>
<reference key="1">
    <citation type="submission" date="2003-01" db="EMBL/GenBank/DDBJ databases">
        <title>Chloroplast DNA phylogeny of tribe Heliantheae (Asteraceae).</title>
        <authorList>
            <person name="Panero J.L."/>
            <person name="Baldwin B.G."/>
            <person name="Schilling E.E."/>
            <person name="Clevinger J.A."/>
        </authorList>
    </citation>
    <scope>NUCLEOTIDE SEQUENCE [GENOMIC DNA]</scope>
</reference>
<name>NDHI_ACMRA</name>
<comment type="function">
    <text evidence="1">NDH shuttles electrons from NAD(P)H:plastoquinone, via FMN and iron-sulfur (Fe-S) centers, to quinones in the photosynthetic chain and possibly in a chloroplast respiratory chain. The immediate electron acceptor for the enzyme in this species is believed to be plastoquinone. Couples the redox reaction to proton translocation, and thus conserves the redox energy in a proton gradient.</text>
</comment>
<comment type="catalytic activity">
    <reaction evidence="1">
        <text>a plastoquinone + NADH + (n+1) H(+)(in) = a plastoquinol + NAD(+) + n H(+)(out)</text>
        <dbReference type="Rhea" id="RHEA:42608"/>
        <dbReference type="Rhea" id="RHEA-COMP:9561"/>
        <dbReference type="Rhea" id="RHEA-COMP:9562"/>
        <dbReference type="ChEBI" id="CHEBI:15378"/>
        <dbReference type="ChEBI" id="CHEBI:17757"/>
        <dbReference type="ChEBI" id="CHEBI:57540"/>
        <dbReference type="ChEBI" id="CHEBI:57945"/>
        <dbReference type="ChEBI" id="CHEBI:62192"/>
    </reaction>
</comment>
<comment type="catalytic activity">
    <reaction evidence="1">
        <text>a plastoquinone + NADPH + (n+1) H(+)(in) = a plastoquinol + NADP(+) + n H(+)(out)</text>
        <dbReference type="Rhea" id="RHEA:42612"/>
        <dbReference type="Rhea" id="RHEA-COMP:9561"/>
        <dbReference type="Rhea" id="RHEA-COMP:9562"/>
        <dbReference type="ChEBI" id="CHEBI:15378"/>
        <dbReference type="ChEBI" id="CHEBI:17757"/>
        <dbReference type="ChEBI" id="CHEBI:57783"/>
        <dbReference type="ChEBI" id="CHEBI:58349"/>
        <dbReference type="ChEBI" id="CHEBI:62192"/>
    </reaction>
</comment>
<comment type="cofactor">
    <cofactor evidence="1">
        <name>[4Fe-4S] cluster</name>
        <dbReference type="ChEBI" id="CHEBI:49883"/>
    </cofactor>
    <text evidence="1">Binds 2 [4Fe-4S] clusters per subunit.</text>
</comment>
<comment type="subunit">
    <text evidence="1">NDH is composed of at least 16 different subunits, 5 of which are encoded in the nucleus.</text>
</comment>
<comment type="subcellular location">
    <subcellularLocation>
        <location evidence="1">Plastid</location>
        <location evidence="1">Chloroplast thylakoid membrane</location>
        <topology evidence="1">Peripheral membrane protein</topology>
    </subcellularLocation>
</comment>
<comment type="similarity">
    <text evidence="1">Belongs to the complex I 23 kDa subunit family.</text>
</comment>
<accession>Q8HVW2</accession>
<geneLocation type="chloroplast"/>
<evidence type="ECO:0000255" key="1">
    <source>
        <dbReference type="HAMAP-Rule" id="MF_01351"/>
    </source>
</evidence>
<keyword id="KW-0004">4Fe-4S</keyword>
<keyword id="KW-0150">Chloroplast</keyword>
<keyword id="KW-0408">Iron</keyword>
<keyword id="KW-0411">Iron-sulfur</keyword>
<keyword id="KW-0472">Membrane</keyword>
<keyword id="KW-0479">Metal-binding</keyword>
<keyword id="KW-0520">NAD</keyword>
<keyword id="KW-0521">NADP</keyword>
<keyword id="KW-0934">Plastid</keyword>
<keyword id="KW-0618">Plastoquinone</keyword>
<keyword id="KW-0874">Quinone</keyword>
<keyword id="KW-0677">Repeat</keyword>
<keyword id="KW-0793">Thylakoid</keyword>
<keyword id="KW-1278">Translocase</keyword>
<sequence>MFPMVTEFMNYGQQTVRAARYIGQGFMITLSHANRLPVTIQYPYEKLITSERFRGRIHFEFDKCIACEVCVRVCPIDLPVVDWKLETDIRKKRLLNYSIDFGICIFCGNCVEYCPTNCLSMTEEYELSTYDRHELNYNQIALGRLPMSIIDDYTIRTIFNLPEIKT</sequence>
<proteinExistence type="inferred from homology"/>
<feature type="chain" id="PRO_0000250753" description="NAD(P)H-quinone oxidoreductase subunit I, chloroplastic">
    <location>
        <begin position="1"/>
        <end position="166"/>
    </location>
</feature>
<feature type="domain" description="4Fe-4S ferredoxin-type 1" evidence="1">
    <location>
        <begin position="55"/>
        <end position="84"/>
    </location>
</feature>
<feature type="domain" description="4Fe-4S ferredoxin-type 2" evidence="1">
    <location>
        <begin position="95"/>
        <end position="124"/>
    </location>
</feature>
<feature type="binding site" evidence="1">
    <location>
        <position position="64"/>
    </location>
    <ligand>
        <name>[4Fe-4S] cluster</name>
        <dbReference type="ChEBI" id="CHEBI:49883"/>
        <label>1</label>
    </ligand>
</feature>
<feature type="binding site" evidence="1">
    <location>
        <position position="67"/>
    </location>
    <ligand>
        <name>[4Fe-4S] cluster</name>
        <dbReference type="ChEBI" id="CHEBI:49883"/>
        <label>1</label>
    </ligand>
</feature>
<feature type="binding site" evidence="1">
    <location>
        <position position="70"/>
    </location>
    <ligand>
        <name>[4Fe-4S] cluster</name>
        <dbReference type="ChEBI" id="CHEBI:49883"/>
        <label>1</label>
    </ligand>
</feature>
<feature type="binding site" evidence="1">
    <location>
        <position position="74"/>
    </location>
    <ligand>
        <name>[4Fe-4S] cluster</name>
        <dbReference type="ChEBI" id="CHEBI:49883"/>
        <label>2</label>
    </ligand>
</feature>
<feature type="binding site" evidence="1">
    <location>
        <position position="104"/>
    </location>
    <ligand>
        <name>[4Fe-4S] cluster</name>
        <dbReference type="ChEBI" id="CHEBI:49883"/>
        <label>2</label>
    </ligand>
</feature>
<feature type="binding site" evidence="1">
    <location>
        <position position="107"/>
    </location>
    <ligand>
        <name>[4Fe-4S] cluster</name>
        <dbReference type="ChEBI" id="CHEBI:49883"/>
        <label>2</label>
    </ligand>
</feature>
<feature type="binding site" evidence="1">
    <location>
        <position position="110"/>
    </location>
    <ligand>
        <name>[4Fe-4S] cluster</name>
        <dbReference type="ChEBI" id="CHEBI:49883"/>
        <label>2</label>
    </ligand>
</feature>
<feature type="binding site" evidence="1">
    <location>
        <position position="114"/>
    </location>
    <ligand>
        <name>[4Fe-4S] cluster</name>
        <dbReference type="ChEBI" id="CHEBI:49883"/>
        <label>1</label>
    </ligand>
</feature>
<protein>
    <recommendedName>
        <fullName evidence="1">NAD(P)H-quinone oxidoreductase subunit I, chloroplastic</fullName>
        <ecNumber evidence="1">7.1.1.-</ecNumber>
    </recommendedName>
    <alternativeName>
        <fullName evidence="1">NAD(P)H dehydrogenase subunit I</fullName>
        <shortName evidence="1">NDH subunit I</shortName>
    </alternativeName>
    <alternativeName>
        <fullName evidence="1">NADH-plastoquinone oxidoreductase subunit I</fullName>
    </alternativeName>
</protein>
<organism>
    <name type="scientific">Acmella radicans</name>
    <name type="common">Creeping spotflower</name>
    <dbReference type="NCBI Taxonomy" id="217838"/>
    <lineage>
        <taxon>Eukaryota</taxon>
        <taxon>Viridiplantae</taxon>
        <taxon>Streptophyta</taxon>
        <taxon>Embryophyta</taxon>
        <taxon>Tracheophyta</taxon>
        <taxon>Spermatophyta</taxon>
        <taxon>Magnoliopsida</taxon>
        <taxon>eudicotyledons</taxon>
        <taxon>Gunneridae</taxon>
        <taxon>Pentapetalae</taxon>
        <taxon>asterids</taxon>
        <taxon>campanulids</taxon>
        <taxon>Asterales</taxon>
        <taxon>Asteraceae</taxon>
        <taxon>Asteroideae</taxon>
        <taxon>Heliantheae alliance</taxon>
        <taxon>Heliantheae</taxon>
        <taxon>Acmella</taxon>
    </lineage>
</organism>
<gene>
    <name evidence="1" type="primary">ndhI</name>
</gene>